<keyword id="KW-0903">Direct protein sequencing</keyword>
<keyword id="KW-0233">DNA recombination</keyword>
<keyword id="KW-0238">DNA-binding</keyword>
<keyword id="KW-0804">Transcription</keyword>
<keyword id="KW-0805">Transcription regulation</keyword>
<keyword id="KW-0810">Translation regulation</keyword>
<reference key="1">
    <citation type="journal article" date="1993" name="J. Bacteriol.">
        <title>Purification of the integration host factor homolog of Rhodobacter capsulatus: cloning and sequencing of the hip gene, which encodes the beta subunit.</title>
        <authorList>
            <person name="Toussaint B."/>
            <person name="Delic-Attree I."/>
            <person name="de Sury D'Aspremont R."/>
            <person name="David L."/>
            <person name="Vincon M."/>
            <person name="Vignais P.M."/>
        </authorList>
    </citation>
    <scope>NUCLEOTIDE SEQUENCE [GENOMIC DNA]</scope>
    <scope>PROTEIN SEQUENCE OF 1-8 AND 73-80</scope>
    <source>
        <strain>ATCC 33303 / B10</strain>
    </source>
</reference>
<comment type="function">
    <text>This protein is one of the two subunits of integration host factor, a specific DNA-binding protein that functions in genetic recombination as well as in transcriptional and translational control. Involved in hydrogenase gene expression.</text>
</comment>
<comment type="subunit">
    <text>Heterodimer of an alpha and a beta chain.</text>
</comment>
<comment type="similarity">
    <text evidence="1">Belongs to the bacterial histone-like protein family.</text>
</comment>
<evidence type="ECO:0000305" key="1"/>
<protein>
    <recommendedName>
        <fullName>Integration host factor subunit beta</fullName>
        <shortName>IHF-beta</shortName>
    </recommendedName>
</protein>
<feature type="chain" id="PRO_0000105067" description="Integration host factor subunit beta">
    <location>
        <begin position="1"/>
        <end position="95"/>
    </location>
</feature>
<organism>
    <name type="scientific">Rhodobacter capsulatus</name>
    <name type="common">Rhodopseudomonas capsulata</name>
    <dbReference type="NCBI Taxonomy" id="1061"/>
    <lineage>
        <taxon>Bacteria</taxon>
        <taxon>Pseudomonadati</taxon>
        <taxon>Pseudomonadota</taxon>
        <taxon>Alphaproteobacteria</taxon>
        <taxon>Rhodobacterales</taxon>
        <taxon>Rhodobacter group</taxon>
        <taxon>Rhodobacter</taxon>
    </lineage>
</organism>
<sequence>MIRSELIAKIAEENPHLFQRDVEKIVNTIFEEIIEAMARGDRVELRGFGAFSVKKRDARTGRNPRTGTSVAVDEKHVPFFKTGKLLRDRLNGGEE</sequence>
<proteinExistence type="evidence at protein level"/>
<accession>Q06607</accession>
<name>IHFB_RHOCA</name>
<gene>
    <name type="primary">ihfB</name>
    <name type="synonym">himD</name>
    <name type="synonym">hip</name>
</gene>
<dbReference type="EMBL" id="L13998">
    <property type="protein sequence ID" value="AAA03551.1"/>
    <property type="molecule type" value="Unassigned_DNA"/>
</dbReference>
<dbReference type="PIR" id="A49900">
    <property type="entry name" value="A49900"/>
</dbReference>
<dbReference type="RefSeq" id="WP_013066863.1">
    <property type="nucleotide sequence ID" value="NZ_VIBE01000002.1"/>
</dbReference>
<dbReference type="SMR" id="Q06607"/>
<dbReference type="GeneID" id="31490040"/>
<dbReference type="OMA" id="DQKSVPF"/>
<dbReference type="GO" id="GO:0005694">
    <property type="term" value="C:chromosome"/>
    <property type="evidence" value="ECO:0007669"/>
    <property type="project" value="InterPro"/>
</dbReference>
<dbReference type="GO" id="GO:0005829">
    <property type="term" value="C:cytosol"/>
    <property type="evidence" value="ECO:0007669"/>
    <property type="project" value="TreeGrafter"/>
</dbReference>
<dbReference type="GO" id="GO:0003677">
    <property type="term" value="F:DNA binding"/>
    <property type="evidence" value="ECO:0007669"/>
    <property type="project" value="UniProtKB-UniRule"/>
</dbReference>
<dbReference type="GO" id="GO:0030527">
    <property type="term" value="F:structural constituent of chromatin"/>
    <property type="evidence" value="ECO:0007669"/>
    <property type="project" value="InterPro"/>
</dbReference>
<dbReference type="GO" id="GO:0006310">
    <property type="term" value="P:DNA recombination"/>
    <property type="evidence" value="ECO:0007669"/>
    <property type="project" value="UniProtKB-UniRule"/>
</dbReference>
<dbReference type="GO" id="GO:0006355">
    <property type="term" value="P:regulation of DNA-templated transcription"/>
    <property type="evidence" value="ECO:0007669"/>
    <property type="project" value="UniProtKB-UniRule"/>
</dbReference>
<dbReference type="GO" id="GO:0006417">
    <property type="term" value="P:regulation of translation"/>
    <property type="evidence" value="ECO:0007669"/>
    <property type="project" value="UniProtKB-UniRule"/>
</dbReference>
<dbReference type="CDD" id="cd13836">
    <property type="entry name" value="IHF_B"/>
    <property type="match status" value="1"/>
</dbReference>
<dbReference type="Gene3D" id="4.10.520.10">
    <property type="entry name" value="IHF-like DNA-binding proteins"/>
    <property type="match status" value="1"/>
</dbReference>
<dbReference type="HAMAP" id="MF_00381">
    <property type="entry name" value="IHF_beta"/>
    <property type="match status" value="1"/>
</dbReference>
<dbReference type="InterPro" id="IPR000119">
    <property type="entry name" value="Hist_DNA-bd"/>
</dbReference>
<dbReference type="InterPro" id="IPR020816">
    <property type="entry name" value="Histone-like_DNA-bd_CS"/>
</dbReference>
<dbReference type="InterPro" id="IPR010992">
    <property type="entry name" value="IHF-like_DNA-bd_dom_sf"/>
</dbReference>
<dbReference type="InterPro" id="IPR005685">
    <property type="entry name" value="IHF_beta"/>
</dbReference>
<dbReference type="NCBIfam" id="TIGR00988">
    <property type="entry name" value="hip"/>
    <property type="match status" value="1"/>
</dbReference>
<dbReference type="NCBIfam" id="NF001222">
    <property type="entry name" value="PRK00199.1"/>
    <property type="match status" value="1"/>
</dbReference>
<dbReference type="PANTHER" id="PTHR33175">
    <property type="entry name" value="DNA-BINDING PROTEIN HU"/>
    <property type="match status" value="1"/>
</dbReference>
<dbReference type="PANTHER" id="PTHR33175:SF5">
    <property type="entry name" value="INTEGRATION HOST FACTOR SUBUNIT BETA"/>
    <property type="match status" value="1"/>
</dbReference>
<dbReference type="Pfam" id="PF00216">
    <property type="entry name" value="Bac_DNA_binding"/>
    <property type="match status" value="1"/>
</dbReference>
<dbReference type="PRINTS" id="PR01727">
    <property type="entry name" value="DNABINDINGHU"/>
</dbReference>
<dbReference type="SMART" id="SM00411">
    <property type="entry name" value="BHL"/>
    <property type="match status" value="1"/>
</dbReference>
<dbReference type="SUPFAM" id="SSF47729">
    <property type="entry name" value="IHF-like DNA-binding proteins"/>
    <property type="match status" value="1"/>
</dbReference>
<dbReference type="PROSITE" id="PS00045">
    <property type="entry name" value="HISTONE_LIKE"/>
    <property type="match status" value="1"/>
</dbReference>